<dbReference type="EC" id="6.1.1.20"/>
<dbReference type="EMBL" id="L42023">
    <property type="protein sequence ID" value="AAC22958.1"/>
    <property type="molecule type" value="Genomic_DNA"/>
</dbReference>
<dbReference type="PIR" id="I64115">
    <property type="entry name" value="I64115"/>
</dbReference>
<dbReference type="RefSeq" id="NP_439463.1">
    <property type="nucleotide sequence ID" value="NC_000907.1"/>
</dbReference>
<dbReference type="SMR" id="P43820"/>
<dbReference type="STRING" id="71421.HI_1312"/>
<dbReference type="BindingDB" id="P43820"/>
<dbReference type="EnsemblBacteria" id="AAC22958">
    <property type="protein sequence ID" value="AAC22958"/>
    <property type="gene ID" value="HI_1312"/>
</dbReference>
<dbReference type="KEGG" id="hin:HI_1312"/>
<dbReference type="PATRIC" id="fig|71421.8.peg.1364"/>
<dbReference type="eggNOG" id="COG0072">
    <property type="taxonomic scope" value="Bacteria"/>
</dbReference>
<dbReference type="eggNOG" id="COG0073">
    <property type="taxonomic scope" value="Bacteria"/>
</dbReference>
<dbReference type="HOGENOM" id="CLU_016891_0_0_6"/>
<dbReference type="OrthoDB" id="9805455at2"/>
<dbReference type="PhylomeDB" id="P43820"/>
<dbReference type="BioCyc" id="HINF71421:G1GJ1-1337-MONOMER"/>
<dbReference type="Proteomes" id="UP000000579">
    <property type="component" value="Chromosome"/>
</dbReference>
<dbReference type="GO" id="GO:0009328">
    <property type="term" value="C:phenylalanine-tRNA ligase complex"/>
    <property type="evidence" value="ECO:0000318"/>
    <property type="project" value="GO_Central"/>
</dbReference>
<dbReference type="GO" id="GO:0005524">
    <property type="term" value="F:ATP binding"/>
    <property type="evidence" value="ECO:0007669"/>
    <property type="project" value="UniProtKB-UniRule"/>
</dbReference>
<dbReference type="GO" id="GO:0000287">
    <property type="term" value="F:magnesium ion binding"/>
    <property type="evidence" value="ECO:0007669"/>
    <property type="project" value="UniProtKB-UniRule"/>
</dbReference>
<dbReference type="GO" id="GO:0004826">
    <property type="term" value="F:phenylalanine-tRNA ligase activity"/>
    <property type="evidence" value="ECO:0007669"/>
    <property type="project" value="UniProtKB-UniRule"/>
</dbReference>
<dbReference type="GO" id="GO:0000049">
    <property type="term" value="F:tRNA binding"/>
    <property type="evidence" value="ECO:0007669"/>
    <property type="project" value="UniProtKB-KW"/>
</dbReference>
<dbReference type="GO" id="GO:0006432">
    <property type="term" value="P:phenylalanyl-tRNA aminoacylation"/>
    <property type="evidence" value="ECO:0000318"/>
    <property type="project" value="GO_Central"/>
</dbReference>
<dbReference type="CDD" id="cd00769">
    <property type="entry name" value="PheRS_beta_core"/>
    <property type="match status" value="1"/>
</dbReference>
<dbReference type="CDD" id="cd02796">
    <property type="entry name" value="tRNA_bind_bactPheRS"/>
    <property type="match status" value="1"/>
</dbReference>
<dbReference type="FunFam" id="2.40.50.140:FF:000045">
    <property type="entry name" value="Phenylalanine--tRNA ligase beta subunit"/>
    <property type="match status" value="1"/>
</dbReference>
<dbReference type="FunFam" id="3.30.56.10:FF:000002">
    <property type="entry name" value="Phenylalanine--tRNA ligase beta subunit"/>
    <property type="match status" value="1"/>
</dbReference>
<dbReference type="FunFam" id="3.30.70.380:FF:000001">
    <property type="entry name" value="Phenylalanine--tRNA ligase beta subunit"/>
    <property type="match status" value="1"/>
</dbReference>
<dbReference type="FunFam" id="3.30.930.10:FF:000022">
    <property type="entry name" value="Phenylalanine--tRNA ligase beta subunit"/>
    <property type="match status" value="1"/>
</dbReference>
<dbReference type="FunFam" id="3.50.40.10:FF:000001">
    <property type="entry name" value="Phenylalanine--tRNA ligase beta subunit"/>
    <property type="match status" value="1"/>
</dbReference>
<dbReference type="Gene3D" id="3.30.56.10">
    <property type="match status" value="2"/>
</dbReference>
<dbReference type="Gene3D" id="3.30.930.10">
    <property type="entry name" value="Bira Bifunctional Protein, Domain 2"/>
    <property type="match status" value="1"/>
</dbReference>
<dbReference type="Gene3D" id="3.30.70.380">
    <property type="entry name" value="Ferrodoxin-fold anticodon-binding domain"/>
    <property type="match status" value="1"/>
</dbReference>
<dbReference type="Gene3D" id="2.40.50.140">
    <property type="entry name" value="Nucleic acid-binding proteins"/>
    <property type="match status" value="1"/>
</dbReference>
<dbReference type="Gene3D" id="3.50.40.10">
    <property type="entry name" value="Phenylalanyl-trna Synthetase, Chain B, domain 3"/>
    <property type="match status" value="1"/>
</dbReference>
<dbReference type="HAMAP" id="MF_00283">
    <property type="entry name" value="Phe_tRNA_synth_beta1"/>
    <property type="match status" value="1"/>
</dbReference>
<dbReference type="InterPro" id="IPR045864">
    <property type="entry name" value="aa-tRNA-synth_II/BPL/LPL"/>
</dbReference>
<dbReference type="InterPro" id="IPR005146">
    <property type="entry name" value="B3/B4_tRNA-bd"/>
</dbReference>
<dbReference type="InterPro" id="IPR009061">
    <property type="entry name" value="DNA-bd_dom_put_sf"/>
</dbReference>
<dbReference type="InterPro" id="IPR005121">
    <property type="entry name" value="Fdx_antiC-bd"/>
</dbReference>
<dbReference type="InterPro" id="IPR036690">
    <property type="entry name" value="Fdx_antiC-bd_sf"/>
</dbReference>
<dbReference type="InterPro" id="IPR012340">
    <property type="entry name" value="NA-bd_OB-fold"/>
</dbReference>
<dbReference type="InterPro" id="IPR045060">
    <property type="entry name" value="Phe-tRNA-ligase_IIc_bsu"/>
</dbReference>
<dbReference type="InterPro" id="IPR004532">
    <property type="entry name" value="Phe-tRNA-ligase_IIc_bsu_bact"/>
</dbReference>
<dbReference type="InterPro" id="IPR020825">
    <property type="entry name" value="Phe-tRNA_synthase-like_B3/B4"/>
</dbReference>
<dbReference type="InterPro" id="IPR041616">
    <property type="entry name" value="PheRS_beta_core"/>
</dbReference>
<dbReference type="InterPro" id="IPR002547">
    <property type="entry name" value="tRNA-bd_dom"/>
</dbReference>
<dbReference type="InterPro" id="IPR033714">
    <property type="entry name" value="tRNA_bind_bactPheRS"/>
</dbReference>
<dbReference type="InterPro" id="IPR005147">
    <property type="entry name" value="tRNA_synthase_B5-dom"/>
</dbReference>
<dbReference type="NCBIfam" id="TIGR00472">
    <property type="entry name" value="pheT_bact"/>
    <property type="match status" value="1"/>
</dbReference>
<dbReference type="NCBIfam" id="NF045760">
    <property type="entry name" value="YtpR"/>
    <property type="match status" value="1"/>
</dbReference>
<dbReference type="PANTHER" id="PTHR10947:SF0">
    <property type="entry name" value="PHENYLALANINE--TRNA LIGASE BETA SUBUNIT"/>
    <property type="match status" value="1"/>
</dbReference>
<dbReference type="PANTHER" id="PTHR10947">
    <property type="entry name" value="PHENYLALANYL-TRNA SYNTHETASE BETA CHAIN AND LEUCINE-RICH REPEAT-CONTAINING PROTEIN 47"/>
    <property type="match status" value="1"/>
</dbReference>
<dbReference type="Pfam" id="PF03483">
    <property type="entry name" value="B3_4"/>
    <property type="match status" value="1"/>
</dbReference>
<dbReference type="Pfam" id="PF03484">
    <property type="entry name" value="B5"/>
    <property type="match status" value="1"/>
</dbReference>
<dbReference type="Pfam" id="PF03147">
    <property type="entry name" value="FDX-ACB"/>
    <property type="match status" value="1"/>
</dbReference>
<dbReference type="Pfam" id="PF01588">
    <property type="entry name" value="tRNA_bind"/>
    <property type="match status" value="1"/>
</dbReference>
<dbReference type="Pfam" id="PF17759">
    <property type="entry name" value="tRNA_synthFbeta"/>
    <property type="match status" value="1"/>
</dbReference>
<dbReference type="SMART" id="SM00873">
    <property type="entry name" value="B3_4"/>
    <property type="match status" value="1"/>
</dbReference>
<dbReference type="SMART" id="SM00874">
    <property type="entry name" value="B5"/>
    <property type="match status" value="1"/>
</dbReference>
<dbReference type="SMART" id="SM00896">
    <property type="entry name" value="FDX-ACB"/>
    <property type="match status" value="1"/>
</dbReference>
<dbReference type="SUPFAM" id="SSF54991">
    <property type="entry name" value="Anticodon-binding domain of PheRS"/>
    <property type="match status" value="1"/>
</dbReference>
<dbReference type="SUPFAM" id="SSF55681">
    <property type="entry name" value="Class II aaRS and biotin synthetases"/>
    <property type="match status" value="1"/>
</dbReference>
<dbReference type="SUPFAM" id="SSF50249">
    <property type="entry name" value="Nucleic acid-binding proteins"/>
    <property type="match status" value="1"/>
</dbReference>
<dbReference type="SUPFAM" id="SSF56037">
    <property type="entry name" value="PheT/TilS domain"/>
    <property type="match status" value="1"/>
</dbReference>
<dbReference type="SUPFAM" id="SSF46955">
    <property type="entry name" value="Putative DNA-binding domain"/>
    <property type="match status" value="1"/>
</dbReference>
<dbReference type="PROSITE" id="PS51483">
    <property type="entry name" value="B5"/>
    <property type="match status" value="1"/>
</dbReference>
<dbReference type="PROSITE" id="PS51447">
    <property type="entry name" value="FDX_ACB"/>
    <property type="match status" value="1"/>
</dbReference>
<dbReference type="PROSITE" id="PS50886">
    <property type="entry name" value="TRBD"/>
    <property type="match status" value="1"/>
</dbReference>
<name>SYFB_HAEIN</name>
<comment type="catalytic activity">
    <reaction>
        <text>tRNA(Phe) + L-phenylalanine + ATP = L-phenylalanyl-tRNA(Phe) + AMP + diphosphate + H(+)</text>
        <dbReference type="Rhea" id="RHEA:19413"/>
        <dbReference type="Rhea" id="RHEA-COMP:9668"/>
        <dbReference type="Rhea" id="RHEA-COMP:9699"/>
        <dbReference type="ChEBI" id="CHEBI:15378"/>
        <dbReference type="ChEBI" id="CHEBI:30616"/>
        <dbReference type="ChEBI" id="CHEBI:33019"/>
        <dbReference type="ChEBI" id="CHEBI:58095"/>
        <dbReference type="ChEBI" id="CHEBI:78442"/>
        <dbReference type="ChEBI" id="CHEBI:78531"/>
        <dbReference type="ChEBI" id="CHEBI:456215"/>
        <dbReference type="EC" id="6.1.1.20"/>
    </reaction>
</comment>
<comment type="cofactor">
    <cofactor evidence="1">
        <name>Mg(2+)</name>
        <dbReference type="ChEBI" id="CHEBI:18420"/>
    </cofactor>
    <text evidence="1">Binds 2 magnesium ions per tetramer.</text>
</comment>
<comment type="subunit">
    <text evidence="1">Tetramer of two alpha and two beta subunits.</text>
</comment>
<comment type="subcellular location">
    <subcellularLocation>
        <location evidence="1">Cytoplasm</location>
    </subcellularLocation>
</comment>
<comment type="similarity">
    <text evidence="2">Belongs to the phenylalanyl-tRNA synthetase beta subunit family. Type 1 subfamily.</text>
</comment>
<organism>
    <name type="scientific">Haemophilus influenzae (strain ATCC 51907 / DSM 11121 / KW20 / Rd)</name>
    <dbReference type="NCBI Taxonomy" id="71421"/>
    <lineage>
        <taxon>Bacteria</taxon>
        <taxon>Pseudomonadati</taxon>
        <taxon>Pseudomonadota</taxon>
        <taxon>Gammaproteobacteria</taxon>
        <taxon>Pasteurellales</taxon>
        <taxon>Pasteurellaceae</taxon>
        <taxon>Haemophilus</taxon>
    </lineage>
</organism>
<feature type="chain" id="PRO_0000126892" description="Phenylalanine--tRNA ligase beta subunit">
    <location>
        <begin position="1"/>
        <end position="795"/>
    </location>
</feature>
<feature type="domain" description="tRNA-binding">
    <location>
        <begin position="39"/>
        <end position="148"/>
    </location>
</feature>
<feature type="domain" description="B5">
    <location>
        <begin position="401"/>
        <end position="476"/>
    </location>
</feature>
<feature type="domain" description="FDX-ACB">
    <location>
        <begin position="701"/>
        <end position="794"/>
    </location>
</feature>
<feature type="binding site" evidence="1">
    <location>
        <position position="454"/>
    </location>
    <ligand>
        <name>Mg(2+)</name>
        <dbReference type="ChEBI" id="CHEBI:18420"/>
        <note>shared with alpha subunit</note>
    </ligand>
</feature>
<feature type="binding site" evidence="1">
    <location>
        <position position="460"/>
    </location>
    <ligand>
        <name>Mg(2+)</name>
        <dbReference type="ChEBI" id="CHEBI:18420"/>
        <note>shared with alpha subunit</note>
    </ligand>
</feature>
<feature type="binding site" evidence="1">
    <location>
        <position position="463"/>
    </location>
    <ligand>
        <name>Mg(2+)</name>
        <dbReference type="ChEBI" id="CHEBI:18420"/>
        <note>shared with alpha subunit</note>
    </ligand>
</feature>
<feature type="binding site" evidence="1">
    <location>
        <position position="464"/>
    </location>
    <ligand>
        <name>Mg(2+)</name>
        <dbReference type="ChEBI" id="CHEBI:18420"/>
        <note>shared with alpha subunit</note>
    </ligand>
</feature>
<keyword id="KW-0030">Aminoacyl-tRNA synthetase</keyword>
<keyword id="KW-0067">ATP-binding</keyword>
<keyword id="KW-0963">Cytoplasm</keyword>
<keyword id="KW-0436">Ligase</keyword>
<keyword id="KW-0460">Magnesium</keyword>
<keyword id="KW-0479">Metal-binding</keyword>
<keyword id="KW-0547">Nucleotide-binding</keyword>
<keyword id="KW-0648">Protein biosynthesis</keyword>
<keyword id="KW-1185">Reference proteome</keyword>
<keyword id="KW-0694">RNA-binding</keyword>
<keyword id="KW-0820">tRNA-binding</keyword>
<accession>P43820</accession>
<proteinExistence type="inferred from homology"/>
<reference key="1">
    <citation type="journal article" date="1995" name="Science">
        <title>Whole-genome random sequencing and assembly of Haemophilus influenzae Rd.</title>
        <authorList>
            <person name="Fleischmann R.D."/>
            <person name="Adams M.D."/>
            <person name="White O."/>
            <person name="Clayton R.A."/>
            <person name="Kirkness E.F."/>
            <person name="Kerlavage A.R."/>
            <person name="Bult C.J."/>
            <person name="Tomb J.-F."/>
            <person name="Dougherty B.A."/>
            <person name="Merrick J.M."/>
            <person name="McKenney K."/>
            <person name="Sutton G.G."/>
            <person name="FitzHugh W."/>
            <person name="Fields C.A."/>
            <person name="Gocayne J.D."/>
            <person name="Scott J.D."/>
            <person name="Shirley R."/>
            <person name="Liu L.-I."/>
            <person name="Glodek A."/>
            <person name="Kelley J.M."/>
            <person name="Weidman J.F."/>
            <person name="Phillips C.A."/>
            <person name="Spriggs T."/>
            <person name="Hedblom E."/>
            <person name="Cotton M.D."/>
            <person name="Utterback T.R."/>
            <person name="Hanna M.C."/>
            <person name="Nguyen D.T."/>
            <person name="Saudek D.M."/>
            <person name="Brandon R.C."/>
            <person name="Fine L.D."/>
            <person name="Fritchman J.L."/>
            <person name="Fuhrmann J.L."/>
            <person name="Geoghagen N.S.M."/>
            <person name="Gnehm C.L."/>
            <person name="McDonald L.A."/>
            <person name="Small K.V."/>
            <person name="Fraser C.M."/>
            <person name="Smith H.O."/>
            <person name="Venter J.C."/>
        </authorList>
    </citation>
    <scope>NUCLEOTIDE SEQUENCE [LARGE SCALE GENOMIC DNA]</scope>
    <source>
        <strain>ATCC 51907 / DSM 11121 / KW20 / Rd</strain>
    </source>
</reference>
<gene>
    <name type="primary">pheT</name>
    <name type="ordered locus">HI_1312</name>
</gene>
<protein>
    <recommendedName>
        <fullName>Phenylalanine--tRNA ligase beta subunit</fullName>
        <ecNumber>6.1.1.20</ecNumber>
    </recommendedName>
    <alternativeName>
        <fullName>Phenylalanyl-tRNA synthetase beta subunit</fullName>
        <shortName>PheRS</shortName>
    </alternativeName>
</protein>
<evidence type="ECO:0000250" key="1"/>
<evidence type="ECO:0000305" key="2"/>
<sequence>MKFSEQWVREWVNPAVSTEQLCEQITMLGLEVDGVEAVAGTFNGVVVGEVVECAQHPDADKLRVTKVNVGGDRLLDIVCGAPNCRQGLKVACATEGAVLPGDFKIKKTKLRGQPSEGMLCSFSELGIDVEADGIIELPLDAPIGTDLREYLALDDNAIEISLTPNRADCLSIAGIAREIGVVNKQLVNQLHFEAAPATISDKVQIDLQAPEACPRYLLRVIKNVNVKAPSPMWMQEKLRRCGIRSIDPIVDITNYILLEFGQPMHAFDAAKVTQPVQVRFAKEGEELVLLDGSTAKLQSNTLLIADQNGPLAMAGIFGGAASGVNSETKDVILESAFFAPLAIAGRARQYGLHTDASHRFERGVDFELARKAMERATALLLEICGGEAGEICEASSETHLPKVNTVQLRRSKLDALLGHHIETGSVTEIFHRLGFDVTYANDIWTVTSASWRFDIEIEEDLIEEVARIYGYNSIPNNAPLAHLCMREHKESDLDLARIKTALVDADYQEAITYSFVDPKIQSLLHPHQEALVLPNPISVEMSAMRVSLISGLLGAVLYNQNRQQSRVRLFETGLRFVPDANAEFGVRQEFVLSAVITGTAKSEHWAGKAESVDFFDLKGDLESVLSLTEGGHRVRFVAKQFDALHPGQSAAIELDGQEIGFIGAIHPSISQKLGLNGKTFVFEILWNAIAARNVVQAKEISKFPANRRDLALVVADSVPAGELIAACKQAGGEKLVQVNLFDVYQGVGVAEGYKSLAISLTVQDNEKTLEDEEINAVISAVLAEVKQRFNAELRD</sequence>